<organism>
    <name type="scientific">Human papillomavirus 11</name>
    <dbReference type="NCBI Taxonomy" id="10580"/>
    <lineage>
        <taxon>Viruses</taxon>
        <taxon>Monodnaviria</taxon>
        <taxon>Shotokuvirae</taxon>
        <taxon>Cossaviricota</taxon>
        <taxon>Papovaviricetes</taxon>
        <taxon>Zurhausenvirales</taxon>
        <taxon>Papillomaviridae</taxon>
        <taxon>Firstpapillomavirinae</taxon>
        <taxon>Alphapapillomavirus</taxon>
        <taxon>Alphapapillomavirus 10</taxon>
    </lineage>
</organism>
<organismHost>
    <name type="scientific">Homo sapiens</name>
    <name type="common">Human</name>
    <dbReference type="NCBI Taxonomy" id="9606"/>
</organismHost>
<gene>
    <name evidence="2" type="primary">E6</name>
</gene>
<dbReference type="EMBL" id="M14119">
    <property type="protein sequence ID" value="AAA46927.1"/>
    <property type="molecule type" value="Genomic_DNA"/>
</dbReference>
<dbReference type="EMBL" id="L36108">
    <property type="protein sequence ID" value="AAA21703.1"/>
    <property type="molecule type" value="Genomic_DNA"/>
</dbReference>
<dbReference type="PIR" id="A03684">
    <property type="entry name" value="W6WL11"/>
</dbReference>
<dbReference type="SMR" id="P04019"/>
<dbReference type="IntAct" id="P04019">
    <property type="interactions" value="9"/>
</dbReference>
<dbReference type="MINT" id="P04019"/>
<dbReference type="Proteomes" id="UP000008222">
    <property type="component" value="Genome"/>
</dbReference>
<dbReference type="GO" id="GO:0030430">
    <property type="term" value="C:host cell cytoplasm"/>
    <property type="evidence" value="ECO:0007669"/>
    <property type="project" value="UniProtKB-SubCell"/>
</dbReference>
<dbReference type="GO" id="GO:0042025">
    <property type="term" value="C:host cell nucleus"/>
    <property type="evidence" value="ECO:0007669"/>
    <property type="project" value="UniProtKB-SubCell"/>
</dbReference>
<dbReference type="GO" id="GO:0003677">
    <property type="term" value="F:DNA binding"/>
    <property type="evidence" value="ECO:0007669"/>
    <property type="project" value="UniProtKB-UniRule"/>
</dbReference>
<dbReference type="GO" id="GO:0008270">
    <property type="term" value="F:zinc ion binding"/>
    <property type="evidence" value="ECO:0007669"/>
    <property type="project" value="UniProtKB-KW"/>
</dbReference>
<dbReference type="GO" id="GO:0006351">
    <property type="term" value="P:DNA-templated transcription"/>
    <property type="evidence" value="ECO:0007669"/>
    <property type="project" value="UniProtKB-UniRule"/>
</dbReference>
<dbReference type="GO" id="GO:0006355">
    <property type="term" value="P:regulation of DNA-templated transcription"/>
    <property type="evidence" value="ECO:0007669"/>
    <property type="project" value="UniProtKB-UniRule"/>
</dbReference>
<dbReference type="GO" id="GO:0052150">
    <property type="term" value="P:symbiont-mediated perturbation of host apoptosis"/>
    <property type="evidence" value="ECO:0007669"/>
    <property type="project" value="UniProtKB-KW"/>
</dbReference>
<dbReference type="GO" id="GO:0039648">
    <property type="term" value="P:symbiont-mediated perturbation of host ubiquitin-like protein modification"/>
    <property type="evidence" value="ECO:0007669"/>
    <property type="project" value="UniProtKB-UniRule"/>
</dbReference>
<dbReference type="GO" id="GO:0052170">
    <property type="term" value="P:symbiont-mediated suppression of host innate immune response"/>
    <property type="evidence" value="ECO:0007669"/>
    <property type="project" value="UniProtKB-KW"/>
</dbReference>
<dbReference type="GO" id="GO:0039502">
    <property type="term" value="P:symbiont-mediated suppression of host type I interferon-mediated signaling pathway"/>
    <property type="evidence" value="ECO:0007669"/>
    <property type="project" value="UniProtKB-UniRule"/>
</dbReference>
<dbReference type="Gene3D" id="3.30.240.40">
    <property type="entry name" value="E6 early regulatory protein"/>
    <property type="match status" value="2"/>
</dbReference>
<dbReference type="HAMAP" id="MF_04006">
    <property type="entry name" value="HPV_E6"/>
    <property type="match status" value="1"/>
</dbReference>
<dbReference type="InterPro" id="IPR001334">
    <property type="entry name" value="E6"/>
</dbReference>
<dbReference type="InterPro" id="IPR038575">
    <property type="entry name" value="E6_sf"/>
</dbReference>
<dbReference type="Pfam" id="PF00518">
    <property type="entry name" value="E6"/>
    <property type="match status" value="1"/>
</dbReference>
<dbReference type="SUPFAM" id="SSF161229">
    <property type="entry name" value="E6 C-terminal domain-like"/>
    <property type="match status" value="2"/>
</dbReference>
<reference key="1">
    <citation type="journal article" date="1986" name="Virology">
        <title>The nucleotide sequence and genome organization of human papilloma virus type 11.</title>
        <authorList>
            <person name="Dartmann K."/>
            <person name="Schwarz E."/>
            <person name="Gissmann L."/>
            <person name="zur Hausen H."/>
        </authorList>
    </citation>
    <scope>NUCLEOTIDE SEQUENCE [GENOMIC DNA]</scope>
</reference>
<reference key="2">
    <citation type="journal article" date="1996" name="Arch. Otolaryngol. Head Neck Surg.">
        <title>Association of human papillomavirus type 11 DNA with squamous cell carcinoma of the tongue.</title>
        <authorList>
            <person name="Fife K.H."/>
            <person name="Fan L."/>
            <person name="Fritsch M.H."/>
            <person name="Bryan J."/>
            <person name="Brown D.R."/>
        </authorList>
    </citation>
    <scope>NUCLEOTIDE SEQUENCE [GENOMIC DNA]</scope>
</reference>
<reference key="3">
    <citation type="journal article" date="2005" name="Mol. Cell">
        <title>E6 oncoprotein represses p53-dependent gene activation via inhibition of protein acetylation independently of inducing p53 degradation.</title>
        <authorList>
            <person name="Thomas M.C."/>
            <person name="Chiang C.M."/>
        </authorList>
    </citation>
    <scope>FUNCTION</scope>
    <scope>INTERACTION WITH HOST EP300 AND TP53</scope>
</reference>
<reference key="4">
    <citation type="journal article" date="2007" name="Virology">
        <title>Association of E6AP (UBE3A) with human papillomavirus type 11 E6 protein.</title>
        <authorList>
            <person name="Brimer N."/>
            <person name="Lyons C."/>
            <person name="Vande Pol S.B."/>
        </authorList>
    </citation>
    <scope>INTERACTION WITH HOST UBE3A/E6-AP</scope>
    <scope>FUNCTION</scope>
</reference>
<reference key="5">
    <citation type="journal article" date="2016" name="J. Gen. Virol.">
        <title>E6 proteins from low-risk human papillomavirus types 6 and 11 are able to protect keratinocytes from apoptosis via Bak degradation.</title>
        <authorList>
            <person name="Underbrink M.P."/>
            <person name="Dupuis C."/>
            <person name="Wang J."/>
            <person name="Tyring S.K."/>
        </authorList>
    </citation>
    <scope>FUNCTION</scope>
</reference>
<feature type="chain" id="PRO_0000133331" description="Protein E6">
    <location>
        <begin position="1"/>
        <end position="150"/>
    </location>
</feature>
<feature type="zinc finger region" evidence="2">
    <location>
        <begin position="31"/>
        <end position="67"/>
    </location>
</feature>
<feature type="zinc finger region" evidence="2">
    <location>
        <begin position="104"/>
        <end position="140"/>
    </location>
</feature>
<evidence type="ECO:0000250" key="1">
    <source>
        <dbReference type="UniProtKB" id="P03126"/>
    </source>
</evidence>
<evidence type="ECO:0000255" key="2">
    <source>
        <dbReference type="HAMAP-Rule" id="MF_04006"/>
    </source>
</evidence>
<evidence type="ECO:0000269" key="3">
    <source>
    </source>
</evidence>
<evidence type="ECO:0000269" key="4">
    <source>
    </source>
</evidence>
<evidence type="ECO:0000269" key="5">
    <source>
    </source>
</evidence>
<evidence type="ECO:0000305" key="6"/>
<keyword id="KW-0010">Activator</keyword>
<keyword id="KW-0238">DNA-binding</keyword>
<keyword id="KW-0244">Early protein</keyword>
<keyword id="KW-1035">Host cytoplasm</keyword>
<keyword id="KW-1048">Host nucleus</keyword>
<keyword id="KW-0945">Host-virus interaction</keyword>
<keyword id="KW-1090">Inhibition of host innate immune response by virus</keyword>
<keyword id="KW-0479">Metal-binding</keyword>
<keyword id="KW-1119">Modulation of host cell apoptosis by virus</keyword>
<keyword id="KW-1185">Reference proteome</keyword>
<keyword id="KW-0804">Transcription</keyword>
<keyword id="KW-0805">Transcription regulation</keyword>
<keyword id="KW-0899">Viral immunoevasion</keyword>
<keyword id="KW-0862">Zinc</keyword>
<keyword id="KW-0863">Zinc-finger</keyword>
<protein>
    <recommendedName>
        <fullName evidence="2">Protein E6</fullName>
    </recommendedName>
</protein>
<sequence length="150" mass="17406">MESKDASTSATSIDQLCKTFNLSLHTLQIQCVFCRNALTTAEIYAYAYKNLKVVWRDNFPFAACACCLELQGKINQYRHFNYAAYAPTVEEETNEDILKVLIRCYLCHKPLCEIEKLKHILGKARFIKLNNQWKGRCLHCWTTCMEDLLP</sequence>
<proteinExistence type="evidence at protein level"/>
<name>VE6_HPV11</name>
<comment type="function">
    <text evidence="2 3 4 5">Plays a major role in the induction and maintenance of cellular transformation. E6 associates with host UBE3A/E6-AP ubiquitin-protein ligase and modulates its activity. Sequesters tumor suppressor TP53 in the host cytoplasm and modulates its activity by interacting with host EP300 that results in the reduction of TP53 acetylation and activation. In turn, apoptosis induced by DNA damage is inhibited. E6 also protects host keratinocytes from apoptosis by mediating the degradation of host BAK1. May also inhibit host immune response.</text>
</comment>
<comment type="subunit">
    <text evidence="2 3 4">Forms homodimers. Interacts with ubiquitin-protein ligase UBE3A/E6-AP; this interaction stimulates UBE3A ubiquitin activity. Interacts with host TP53 and EP300; this interaction inhibits TP53 activity.</text>
</comment>
<comment type="interaction">
    <interactant intactId="EBI-1177232">
        <id>P04019</id>
    </interactant>
    <interactant intactId="EBI-954357">
        <id>Q05086</id>
        <label>UBE3A</label>
    </interactant>
    <organismsDiffer>true</organismsDiffer>
    <experiments>5</experiments>
</comment>
<comment type="subcellular location">
    <subcellularLocation>
        <location evidence="1 2">Host cytoplasm</location>
    </subcellularLocation>
    <subcellularLocation>
        <location evidence="1 2">Host nucleus</location>
    </subcellularLocation>
</comment>
<comment type="miscellaneous">
    <text evidence="2">Belongs to the low risk human alphapapillomavirus family. The cancer-causing human papillomavirus E6 protein has a unique carboxy terminal PDZ domain containing substrate but low risk E6s do not possess this domain.</text>
</comment>
<comment type="similarity">
    <text evidence="6">Belongs to the papillomaviridae E6 protein family.</text>
</comment>
<accession>P04019</accession>